<organism>
    <name type="scientific">Chlorobium luteolum (strain DSM 273 / BCRC 81028 / 2530)</name>
    <name type="common">Pelodictyon luteolum</name>
    <dbReference type="NCBI Taxonomy" id="319225"/>
    <lineage>
        <taxon>Bacteria</taxon>
        <taxon>Pseudomonadati</taxon>
        <taxon>Chlorobiota</taxon>
        <taxon>Chlorobiia</taxon>
        <taxon>Chlorobiales</taxon>
        <taxon>Chlorobiaceae</taxon>
        <taxon>Chlorobium/Pelodictyon group</taxon>
        <taxon>Pelodictyon</taxon>
    </lineage>
</organism>
<accession>Q3B5U2</accession>
<proteinExistence type="inferred from homology"/>
<comment type="function">
    <text evidence="1">This protein is one of the early assembly proteins of the 50S ribosomal subunit, although it is not seen to bind rRNA by itself. It is important during the early stages of 50S assembly.</text>
</comment>
<comment type="subunit">
    <text evidence="1">Part of the 50S ribosomal subunit.</text>
</comment>
<comment type="similarity">
    <text evidence="1">Belongs to the universal ribosomal protein uL13 family.</text>
</comment>
<gene>
    <name evidence="1" type="primary">rplM</name>
    <name type="ordered locus">Plut_0401</name>
</gene>
<keyword id="KW-1185">Reference proteome</keyword>
<keyword id="KW-0687">Ribonucleoprotein</keyword>
<keyword id="KW-0689">Ribosomal protein</keyword>
<reference key="1">
    <citation type="submission" date="2005-08" db="EMBL/GenBank/DDBJ databases">
        <title>Complete sequence of Pelodictyon luteolum DSM 273.</title>
        <authorList>
            <consortium name="US DOE Joint Genome Institute"/>
            <person name="Copeland A."/>
            <person name="Lucas S."/>
            <person name="Lapidus A."/>
            <person name="Barry K."/>
            <person name="Detter J.C."/>
            <person name="Glavina T."/>
            <person name="Hammon N."/>
            <person name="Israni S."/>
            <person name="Pitluck S."/>
            <person name="Bryant D."/>
            <person name="Schmutz J."/>
            <person name="Larimer F."/>
            <person name="Land M."/>
            <person name="Kyrpides N."/>
            <person name="Ivanova N."/>
            <person name="Richardson P."/>
        </authorList>
    </citation>
    <scope>NUCLEOTIDE SEQUENCE [LARGE SCALE GENOMIC DNA]</scope>
    <source>
        <strain>DSM 273 / BCRC 81028 / 2530</strain>
    </source>
</reference>
<dbReference type="EMBL" id="CP000096">
    <property type="protein sequence ID" value="ABB23289.1"/>
    <property type="molecule type" value="Genomic_DNA"/>
</dbReference>
<dbReference type="RefSeq" id="WP_011357164.1">
    <property type="nucleotide sequence ID" value="NC_007512.1"/>
</dbReference>
<dbReference type="SMR" id="Q3B5U2"/>
<dbReference type="STRING" id="319225.Plut_0401"/>
<dbReference type="KEGG" id="plt:Plut_0401"/>
<dbReference type="eggNOG" id="COG0102">
    <property type="taxonomic scope" value="Bacteria"/>
</dbReference>
<dbReference type="HOGENOM" id="CLU_082184_2_2_10"/>
<dbReference type="OrthoDB" id="9801330at2"/>
<dbReference type="Proteomes" id="UP000002709">
    <property type="component" value="Chromosome"/>
</dbReference>
<dbReference type="GO" id="GO:0022625">
    <property type="term" value="C:cytosolic large ribosomal subunit"/>
    <property type="evidence" value="ECO:0007669"/>
    <property type="project" value="TreeGrafter"/>
</dbReference>
<dbReference type="GO" id="GO:0003729">
    <property type="term" value="F:mRNA binding"/>
    <property type="evidence" value="ECO:0007669"/>
    <property type="project" value="TreeGrafter"/>
</dbReference>
<dbReference type="GO" id="GO:0003735">
    <property type="term" value="F:structural constituent of ribosome"/>
    <property type="evidence" value="ECO:0007669"/>
    <property type="project" value="InterPro"/>
</dbReference>
<dbReference type="GO" id="GO:0017148">
    <property type="term" value="P:negative regulation of translation"/>
    <property type="evidence" value="ECO:0007669"/>
    <property type="project" value="TreeGrafter"/>
</dbReference>
<dbReference type="GO" id="GO:0006412">
    <property type="term" value="P:translation"/>
    <property type="evidence" value="ECO:0007669"/>
    <property type="project" value="UniProtKB-UniRule"/>
</dbReference>
<dbReference type="CDD" id="cd00392">
    <property type="entry name" value="Ribosomal_L13"/>
    <property type="match status" value="1"/>
</dbReference>
<dbReference type="FunFam" id="3.90.1180.10:FF:000001">
    <property type="entry name" value="50S ribosomal protein L13"/>
    <property type="match status" value="1"/>
</dbReference>
<dbReference type="Gene3D" id="3.90.1180.10">
    <property type="entry name" value="Ribosomal protein L13"/>
    <property type="match status" value="1"/>
</dbReference>
<dbReference type="HAMAP" id="MF_01366">
    <property type="entry name" value="Ribosomal_uL13"/>
    <property type="match status" value="1"/>
</dbReference>
<dbReference type="InterPro" id="IPR005822">
    <property type="entry name" value="Ribosomal_uL13"/>
</dbReference>
<dbReference type="InterPro" id="IPR005823">
    <property type="entry name" value="Ribosomal_uL13_bac-type"/>
</dbReference>
<dbReference type="InterPro" id="IPR036899">
    <property type="entry name" value="Ribosomal_uL13_sf"/>
</dbReference>
<dbReference type="NCBIfam" id="TIGR01066">
    <property type="entry name" value="rplM_bact"/>
    <property type="match status" value="1"/>
</dbReference>
<dbReference type="PANTHER" id="PTHR11545:SF2">
    <property type="entry name" value="LARGE RIBOSOMAL SUBUNIT PROTEIN UL13M"/>
    <property type="match status" value="1"/>
</dbReference>
<dbReference type="PANTHER" id="PTHR11545">
    <property type="entry name" value="RIBOSOMAL PROTEIN L13"/>
    <property type="match status" value="1"/>
</dbReference>
<dbReference type="Pfam" id="PF00572">
    <property type="entry name" value="Ribosomal_L13"/>
    <property type="match status" value="1"/>
</dbReference>
<dbReference type="PIRSF" id="PIRSF002181">
    <property type="entry name" value="Ribosomal_L13"/>
    <property type="match status" value="1"/>
</dbReference>
<dbReference type="SUPFAM" id="SSF52161">
    <property type="entry name" value="Ribosomal protein L13"/>
    <property type="match status" value="1"/>
</dbReference>
<feature type="chain" id="PRO_0000261763" description="Large ribosomal subunit protein uL13">
    <location>
        <begin position="1"/>
        <end position="149"/>
    </location>
</feature>
<sequence>MSKTLSFKTYSAKPADVERKWYVIDAEGQVLGRMAAEIARVLRGKHKPQFTPHVDTGDFIVVTNAEKVALSGNKENLKTYFSHSHYPGGVRVDSVKDLLRKKPEKIIEHAVWGMLPHNNLGRQLFRKLKVYAGTQHPHEAQAPTEMKIH</sequence>
<protein>
    <recommendedName>
        <fullName evidence="1">Large ribosomal subunit protein uL13</fullName>
    </recommendedName>
    <alternativeName>
        <fullName evidence="2">50S ribosomal protein L13</fullName>
    </alternativeName>
</protein>
<evidence type="ECO:0000255" key="1">
    <source>
        <dbReference type="HAMAP-Rule" id="MF_01366"/>
    </source>
</evidence>
<evidence type="ECO:0000305" key="2"/>
<name>RL13_CHLL3</name>